<organism>
    <name type="scientific">Methanocaldococcus jannaschii (strain ATCC 43067 / DSM 2661 / JAL-1 / JCM 10045 / NBRC 100440)</name>
    <name type="common">Methanococcus jannaschii</name>
    <dbReference type="NCBI Taxonomy" id="243232"/>
    <lineage>
        <taxon>Archaea</taxon>
        <taxon>Methanobacteriati</taxon>
        <taxon>Methanobacteriota</taxon>
        <taxon>Methanomada group</taxon>
        <taxon>Methanococci</taxon>
        <taxon>Methanococcales</taxon>
        <taxon>Methanocaldococcaceae</taxon>
        <taxon>Methanocaldococcus</taxon>
    </lineage>
</organism>
<accession>Q58077</accession>
<name>Y663_METJA</name>
<reference key="1">
    <citation type="journal article" date="1996" name="Science">
        <title>Complete genome sequence of the methanogenic archaeon, Methanococcus jannaschii.</title>
        <authorList>
            <person name="Bult C.J."/>
            <person name="White O."/>
            <person name="Olsen G.J."/>
            <person name="Zhou L."/>
            <person name="Fleischmann R.D."/>
            <person name="Sutton G.G."/>
            <person name="Blake J.A."/>
            <person name="FitzGerald L.M."/>
            <person name="Clayton R.A."/>
            <person name="Gocayne J.D."/>
            <person name="Kerlavage A.R."/>
            <person name="Dougherty B.A."/>
            <person name="Tomb J.-F."/>
            <person name="Adams M.D."/>
            <person name="Reich C.I."/>
            <person name="Overbeek R."/>
            <person name="Kirkness E.F."/>
            <person name="Weinstock K.G."/>
            <person name="Merrick J.M."/>
            <person name="Glodek A."/>
            <person name="Scott J.L."/>
            <person name="Geoghagen N.S.M."/>
            <person name="Weidman J.F."/>
            <person name="Fuhrmann J.L."/>
            <person name="Nguyen D."/>
            <person name="Utterback T.R."/>
            <person name="Kelley J.M."/>
            <person name="Peterson J.D."/>
            <person name="Sadow P.W."/>
            <person name="Hanna M.C."/>
            <person name="Cotton M.D."/>
            <person name="Roberts K.M."/>
            <person name="Hurst M.A."/>
            <person name="Kaine B.P."/>
            <person name="Borodovsky M."/>
            <person name="Klenk H.-P."/>
            <person name="Fraser C.M."/>
            <person name="Smith H.O."/>
            <person name="Woese C.R."/>
            <person name="Venter J.C."/>
        </authorList>
    </citation>
    <scope>NUCLEOTIDE SEQUENCE [LARGE SCALE GENOMIC DNA]</scope>
    <source>
        <strain>ATCC 43067 / DSM 2661 / JAL-1 / JCM 10045 / NBRC 100440</strain>
    </source>
</reference>
<evidence type="ECO:0000305" key="1"/>
<feature type="chain" id="PRO_0000090834" description="Uncharacterized protein MJ0663">
    <location>
        <begin position="1"/>
        <end position="494"/>
    </location>
</feature>
<gene>
    <name type="ordered locus">MJ0663</name>
</gene>
<comment type="similarity">
    <text evidence="1">Belongs to the TPP enzyme family.</text>
</comment>
<proteinExistence type="inferred from homology"/>
<protein>
    <recommendedName>
        <fullName>Uncharacterized protein MJ0663</fullName>
    </recommendedName>
</protein>
<dbReference type="EMBL" id="L77117">
    <property type="protein sequence ID" value="AAB98655.1"/>
    <property type="molecule type" value="Genomic_DNA"/>
</dbReference>
<dbReference type="PIR" id="G64382">
    <property type="entry name" value="G64382"/>
</dbReference>
<dbReference type="SMR" id="Q58077"/>
<dbReference type="FunCoup" id="Q58077">
    <property type="interactions" value="93"/>
</dbReference>
<dbReference type="STRING" id="243232.MJ_0663"/>
<dbReference type="PaxDb" id="243232-MJ_0663"/>
<dbReference type="EnsemblBacteria" id="AAB98655">
    <property type="protein sequence ID" value="AAB98655"/>
    <property type="gene ID" value="MJ_0663"/>
</dbReference>
<dbReference type="KEGG" id="mja:MJ_0663"/>
<dbReference type="eggNOG" id="arCOG02000">
    <property type="taxonomic scope" value="Archaea"/>
</dbReference>
<dbReference type="HOGENOM" id="CLU_013748_3_1_2"/>
<dbReference type="InParanoid" id="Q58077"/>
<dbReference type="PhylomeDB" id="Q58077"/>
<dbReference type="BioCyc" id="MetaCyc:MONOMER-14614"/>
<dbReference type="Proteomes" id="UP000000805">
    <property type="component" value="Chromosome"/>
</dbReference>
<dbReference type="GO" id="GO:0005948">
    <property type="term" value="C:acetolactate synthase complex"/>
    <property type="evidence" value="ECO:0000318"/>
    <property type="project" value="GO_Central"/>
</dbReference>
<dbReference type="GO" id="GO:0003984">
    <property type="term" value="F:acetolactate synthase activity"/>
    <property type="evidence" value="ECO:0000318"/>
    <property type="project" value="GO_Central"/>
</dbReference>
<dbReference type="GO" id="GO:0050660">
    <property type="term" value="F:flavin adenine dinucleotide binding"/>
    <property type="evidence" value="ECO:0000318"/>
    <property type="project" value="GO_Central"/>
</dbReference>
<dbReference type="GO" id="GO:0000287">
    <property type="term" value="F:magnesium ion binding"/>
    <property type="evidence" value="ECO:0007669"/>
    <property type="project" value="InterPro"/>
</dbReference>
<dbReference type="GO" id="GO:0030976">
    <property type="term" value="F:thiamine pyrophosphate binding"/>
    <property type="evidence" value="ECO:0007669"/>
    <property type="project" value="InterPro"/>
</dbReference>
<dbReference type="GO" id="GO:0009097">
    <property type="term" value="P:isoleucine biosynthetic process"/>
    <property type="evidence" value="ECO:0000318"/>
    <property type="project" value="GO_Central"/>
</dbReference>
<dbReference type="GO" id="GO:0009099">
    <property type="term" value="P:L-valine biosynthetic process"/>
    <property type="evidence" value="ECO:0000318"/>
    <property type="project" value="GO_Central"/>
</dbReference>
<dbReference type="GO" id="GO:0044272">
    <property type="term" value="P:sulfur compound biosynthetic process"/>
    <property type="evidence" value="ECO:0007669"/>
    <property type="project" value="UniProtKB-ARBA"/>
</dbReference>
<dbReference type="CDD" id="cd07035">
    <property type="entry name" value="TPP_PYR_POX_like"/>
    <property type="match status" value="1"/>
</dbReference>
<dbReference type="Gene3D" id="3.40.50.970">
    <property type="match status" value="2"/>
</dbReference>
<dbReference type="Gene3D" id="3.40.50.1220">
    <property type="entry name" value="TPP-binding domain"/>
    <property type="match status" value="1"/>
</dbReference>
<dbReference type="InterPro" id="IPR029035">
    <property type="entry name" value="DHS-like_NAD/FAD-binding_dom"/>
</dbReference>
<dbReference type="InterPro" id="IPR029061">
    <property type="entry name" value="THDP-binding"/>
</dbReference>
<dbReference type="InterPro" id="IPR012000">
    <property type="entry name" value="Thiamin_PyroP_enz_cen_dom"/>
</dbReference>
<dbReference type="InterPro" id="IPR012001">
    <property type="entry name" value="Thiamin_PyroP_enz_TPP-bd_dom"/>
</dbReference>
<dbReference type="InterPro" id="IPR045229">
    <property type="entry name" value="TPP_enz"/>
</dbReference>
<dbReference type="InterPro" id="IPR011766">
    <property type="entry name" value="TPP_enzyme_TPP-bd"/>
</dbReference>
<dbReference type="PANTHER" id="PTHR18968:SF13">
    <property type="entry name" value="ACETOLACTATE SYNTHASE CATALYTIC SUBUNIT, MITOCHONDRIAL"/>
    <property type="match status" value="1"/>
</dbReference>
<dbReference type="PANTHER" id="PTHR18968">
    <property type="entry name" value="THIAMINE PYROPHOSPHATE ENZYMES"/>
    <property type="match status" value="1"/>
</dbReference>
<dbReference type="Pfam" id="PF02775">
    <property type="entry name" value="TPP_enzyme_C"/>
    <property type="match status" value="1"/>
</dbReference>
<dbReference type="Pfam" id="PF00205">
    <property type="entry name" value="TPP_enzyme_M"/>
    <property type="match status" value="1"/>
</dbReference>
<dbReference type="Pfam" id="PF02776">
    <property type="entry name" value="TPP_enzyme_N"/>
    <property type="match status" value="1"/>
</dbReference>
<dbReference type="SUPFAM" id="SSF52467">
    <property type="entry name" value="DHS-like NAD/FAD-binding domain"/>
    <property type="match status" value="1"/>
</dbReference>
<dbReference type="SUPFAM" id="SSF52518">
    <property type="entry name" value="Thiamin diphosphate-binding fold (THDP-binding)"/>
    <property type="match status" value="2"/>
</dbReference>
<keyword id="KW-1185">Reference proteome</keyword>
<keyword id="KW-0786">Thiamine pyrophosphate</keyword>
<sequence length="494" mass="55355">MGGNIKFLEAMVDFLERNVKTIFSYPGEQILPLYNEIEGSSIKNIMVRDERGAGFMADGYARITNYIGVCLATAGPGATNLTTPIATAYKDNSSVLAITGRCQRKYIGKNYFQEVNMDFLNFYKGYFVDKAEVSYIAKAFADCLFNKKPVQLNIPVDLYKEEAKDINITTYTDIYKDDETPSNNIKEIDVKKPLFLIGQGIFGTLSYKEIVKISKILEKINCPIATTFPARGVINEKLENCIGLVGRRGDLKSLLEADKIINIGSSLSYNTYVESVREKLLSKTENIQLKPKSIKELKEFFENLDVKNSSWIYKNSNKFQPSGDYSNKIYEIIKNIPEDAIIVTDAGKHTVFTCLLKTCVIPRNIISSHSFGTMGFGLPASIGVKFGTIDFNIDREVVLISGDGGFLMNVEELQVVAENNLKILMVVMKNNSLAEFCKIKNPNFNKIADAFEIDNCYIENVDEIGSEIKGYLKKNKPLLVVVETENEPLPKPNI</sequence>